<feature type="chain" id="PRO_0000050437" description="Sugar transport protein 7">
    <location>
        <begin position="1"/>
        <end position="513"/>
    </location>
</feature>
<feature type="topological domain" description="Cytoplasmic" evidence="2">
    <location>
        <begin position="1"/>
        <end position="26"/>
    </location>
</feature>
<feature type="transmembrane region" description="Helical; Name=1" evidence="2">
    <location>
        <begin position="27"/>
        <end position="47"/>
    </location>
</feature>
<feature type="transmembrane region" description="Helical; Name=2" evidence="2">
    <location>
        <begin position="84"/>
        <end position="104"/>
    </location>
</feature>
<feature type="transmembrane region" description="Helical; Name=3" evidence="2">
    <location>
        <begin position="121"/>
        <end position="141"/>
    </location>
</feature>
<feature type="transmembrane region" description="Helical; Name=4" evidence="2">
    <location>
        <begin position="144"/>
        <end position="164"/>
    </location>
</feature>
<feature type="transmembrane region" description="Helical; Name=5" evidence="2">
    <location>
        <begin position="171"/>
        <end position="191"/>
    </location>
</feature>
<feature type="transmembrane region" description="Helical; Name=6" evidence="2">
    <location>
        <begin position="205"/>
        <end position="225"/>
    </location>
</feature>
<feature type="transmembrane region" description="Helical; Name=7" evidence="2">
    <location>
        <begin position="286"/>
        <end position="306"/>
    </location>
</feature>
<feature type="transmembrane region" description="Helical; Name=8" evidence="2">
    <location>
        <begin position="324"/>
        <end position="344"/>
    </location>
</feature>
<feature type="transmembrane region" description="Helical; Name=9" evidence="2">
    <location>
        <begin position="351"/>
        <end position="371"/>
    </location>
</feature>
<feature type="transmembrane region" description="Helical; Name=10" evidence="2">
    <location>
        <begin position="387"/>
        <end position="407"/>
    </location>
</feature>
<feature type="transmembrane region" description="Helical; Name=11" evidence="2">
    <location>
        <begin position="427"/>
        <end position="447"/>
    </location>
</feature>
<feature type="transmembrane region" description="Helical; Name=12" evidence="2">
    <location>
        <begin position="452"/>
        <end position="472"/>
    </location>
</feature>
<feature type="topological domain" description="Cytoplasmic" evidence="2">
    <location>
        <begin position="473"/>
        <end position="513"/>
    </location>
</feature>
<feature type="sequence conflict" description="In Ref. 4; AAB57796." evidence="4" ref="4">
    <original>E</original>
    <variation>D</variation>
    <location>
        <position position="233"/>
    </location>
</feature>
<feature type="sequence conflict" description="In Ref. 5; CAA04905." evidence="4" ref="5">
    <original>I</original>
    <variation>V</variation>
    <location>
        <position position="439"/>
    </location>
</feature>
<name>STP7_ARATH</name>
<keyword id="KW-1003">Cell membrane</keyword>
<keyword id="KW-0472">Membrane</keyword>
<keyword id="KW-1185">Reference proteome</keyword>
<keyword id="KW-0762">Sugar transport</keyword>
<keyword id="KW-0769">Symport</keyword>
<keyword id="KW-0812">Transmembrane</keyword>
<keyword id="KW-1133">Transmembrane helix</keyword>
<keyword id="KW-0813">Transport</keyword>
<sequence>MAGGSFGPTGVAKERAEQYQGKVTSYVIIACLVAAIGGSIFGYDIGISGGVTSMDEFLEEFFHTVYEKKKQAHESNYCKYDNQGLAAFTSSLYLAGLVSTLVASPITRNYGRRASIVCGGISFLIGSGLNAGAVNLAMLLAGRIMLGVGIGFGNQAVPLYLSEVAPTHLRGGLNMMFQLATTIGIFTANMVNYGTQQLKPWGWRLSLGLAAFPALLMTLGGYFLPETPNSLVERGLTERGRRVLVKLRGTENVNAELQDMVDASELANSIKHPFRNILQKRHRPQLVMAICMPMFQILTGINSILFYAPVLFQTMGFGGNASLYSSALTGAVLVLSTFISIGLVDRLGRRALLITGGIQMIICQVIVAVILGVKFGDNQELSKGYSVIVVIFICLFVVAFGWSWGPLGWTIPSEIFPLETRSAGQSITVAVNLLFTFIIAQAFLGLLCAFKFGIFLFFAGWVTVMTIFVYFLLPETKGVPIEEMTLLWSKHWFWKKVLPDATNLEDESKNVSV</sequence>
<comment type="function">
    <text evidence="1">Mediates an active uptake of hexoses, probably by sugar/hydrogen symport.</text>
</comment>
<comment type="subcellular location">
    <subcellularLocation>
        <location evidence="3">Cell membrane</location>
        <topology evidence="2">Multi-pass membrane protein</topology>
    </subcellularLocation>
</comment>
<comment type="similarity">
    <text evidence="4">Belongs to the major facilitator superfamily. Sugar transporter (TC 2.A.1.1) family.</text>
</comment>
<evidence type="ECO:0000250" key="1"/>
<evidence type="ECO:0000255" key="2"/>
<evidence type="ECO:0000269" key="3">
    <source>
    </source>
</evidence>
<evidence type="ECO:0000305" key="4"/>
<organism>
    <name type="scientific">Arabidopsis thaliana</name>
    <name type="common">Mouse-ear cress</name>
    <dbReference type="NCBI Taxonomy" id="3702"/>
    <lineage>
        <taxon>Eukaryota</taxon>
        <taxon>Viridiplantae</taxon>
        <taxon>Streptophyta</taxon>
        <taxon>Embryophyta</taxon>
        <taxon>Tracheophyta</taxon>
        <taxon>Spermatophyta</taxon>
        <taxon>Magnoliopsida</taxon>
        <taxon>eudicotyledons</taxon>
        <taxon>Gunneridae</taxon>
        <taxon>Pentapetalae</taxon>
        <taxon>rosids</taxon>
        <taxon>malvids</taxon>
        <taxon>Brassicales</taxon>
        <taxon>Brassicaceae</taxon>
        <taxon>Camelineae</taxon>
        <taxon>Arabidopsis</taxon>
    </lineage>
</organism>
<gene>
    <name type="primary">STP7</name>
    <name type="ordered locus">At4g02050</name>
    <name type="ORF">AGAA.1</name>
    <name type="ORF">T10M13.6</name>
</gene>
<protein>
    <recommendedName>
        <fullName>Sugar transport protein 7</fullName>
    </recommendedName>
    <alternativeName>
        <fullName>Hexose transporter 7</fullName>
    </alternativeName>
</protein>
<proteinExistence type="evidence at protein level"/>
<dbReference type="EMBL" id="AJ344331">
    <property type="protein sequence ID" value="CAC69067.1"/>
    <property type="molecule type" value="mRNA"/>
</dbReference>
<dbReference type="EMBL" id="AF001308">
    <property type="protein sequence ID" value="AAC78697.1"/>
    <property type="molecule type" value="Genomic_DNA"/>
</dbReference>
<dbReference type="EMBL" id="AL161493">
    <property type="protein sequence ID" value="CAB80698.1"/>
    <property type="molecule type" value="Genomic_DNA"/>
</dbReference>
<dbReference type="EMBL" id="CP002687">
    <property type="protein sequence ID" value="AEE82116.1"/>
    <property type="molecule type" value="Genomic_DNA"/>
</dbReference>
<dbReference type="EMBL" id="CP002687">
    <property type="protein sequence ID" value="ANM67604.1"/>
    <property type="molecule type" value="Genomic_DNA"/>
</dbReference>
<dbReference type="EMBL" id="AF001535">
    <property type="protein sequence ID" value="AAB57796.1"/>
    <property type="molecule type" value="Genomic_DNA"/>
</dbReference>
<dbReference type="EMBL" id="AJ001660">
    <property type="protein sequence ID" value="CAA04905.1"/>
    <property type="molecule type" value="Genomic_DNA"/>
</dbReference>
<dbReference type="PIR" id="T01506">
    <property type="entry name" value="T01506"/>
</dbReference>
<dbReference type="RefSeq" id="NP_001329423.1">
    <property type="nucleotide sequence ID" value="NM_001340358.1"/>
</dbReference>
<dbReference type="RefSeq" id="NP_192114.1">
    <property type="nucleotide sequence ID" value="NM_116436.6"/>
</dbReference>
<dbReference type="SMR" id="O04249"/>
<dbReference type="BioGRID" id="13443">
    <property type="interactions" value="2"/>
</dbReference>
<dbReference type="FunCoup" id="O04249">
    <property type="interactions" value="286"/>
</dbReference>
<dbReference type="STRING" id="3702.O04249"/>
<dbReference type="iPTMnet" id="O04249"/>
<dbReference type="PaxDb" id="3702-AT4G02050.1"/>
<dbReference type="ProteomicsDB" id="228268"/>
<dbReference type="EnsemblPlants" id="AT4G02050.1">
    <property type="protein sequence ID" value="AT4G02050.1"/>
    <property type="gene ID" value="AT4G02050"/>
</dbReference>
<dbReference type="EnsemblPlants" id="AT4G02050.2">
    <property type="protein sequence ID" value="AT4G02050.2"/>
    <property type="gene ID" value="AT4G02050"/>
</dbReference>
<dbReference type="GeneID" id="828154"/>
<dbReference type="Gramene" id="AT4G02050.1">
    <property type="protein sequence ID" value="AT4G02050.1"/>
    <property type="gene ID" value="AT4G02050"/>
</dbReference>
<dbReference type="Gramene" id="AT4G02050.2">
    <property type="protein sequence ID" value="AT4G02050.2"/>
    <property type="gene ID" value="AT4G02050"/>
</dbReference>
<dbReference type="KEGG" id="ath:AT4G02050"/>
<dbReference type="Araport" id="AT4G02050"/>
<dbReference type="TAIR" id="AT4G02050">
    <property type="gene designation" value="STP7"/>
</dbReference>
<dbReference type="eggNOG" id="KOG0254">
    <property type="taxonomic scope" value="Eukaryota"/>
</dbReference>
<dbReference type="HOGENOM" id="CLU_001265_30_5_1"/>
<dbReference type="InParanoid" id="O04249"/>
<dbReference type="OMA" id="FMQTFAP"/>
<dbReference type="OrthoDB" id="5296287at2759"/>
<dbReference type="PhylomeDB" id="O04249"/>
<dbReference type="PRO" id="PR:O04249"/>
<dbReference type="Proteomes" id="UP000006548">
    <property type="component" value="Chromosome 4"/>
</dbReference>
<dbReference type="ExpressionAtlas" id="O04249">
    <property type="expression patterns" value="baseline and differential"/>
</dbReference>
<dbReference type="GO" id="GO:0012505">
    <property type="term" value="C:endomembrane system"/>
    <property type="evidence" value="ECO:0000314"/>
    <property type="project" value="TAIR"/>
</dbReference>
<dbReference type="GO" id="GO:0005886">
    <property type="term" value="C:plasma membrane"/>
    <property type="evidence" value="ECO:0000314"/>
    <property type="project" value="TAIR"/>
</dbReference>
<dbReference type="GO" id="GO:0090406">
    <property type="term" value="C:pollen tube"/>
    <property type="evidence" value="ECO:0000314"/>
    <property type="project" value="TAIR"/>
</dbReference>
<dbReference type="GO" id="GO:0042900">
    <property type="term" value="F:arabinose transmembrane transporter activity"/>
    <property type="evidence" value="ECO:0000314"/>
    <property type="project" value="TAIR"/>
</dbReference>
<dbReference type="GO" id="GO:0015293">
    <property type="term" value="F:symporter activity"/>
    <property type="evidence" value="ECO:0007669"/>
    <property type="project" value="UniProtKB-KW"/>
</dbReference>
<dbReference type="GO" id="GO:0042882">
    <property type="term" value="P:L-arabinose transmembrane transport"/>
    <property type="evidence" value="ECO:0000314"/>
    <property type="project" value="TAIR"/>
</dbReference>
<dbReference type="CDD" id="cd17361">
    <property type="entry name" value="MFS_STP"/>
    <property type="match status" value="1"/>
</dbReference>
<dbReference type="FunFam" id="1.20.1250.20:FF:000002">
    <property type="entry name" value="Sugar transport protein 13"/>
    <property type="match status" value="1"/>
</dbReference>
<dbReference type="Gene3D" id="1.20.1250.20">
    <property type="entry name" value="MFS general substrate transporter like domains"/>
    <property type="match status" value="1"/>
</dbReference>
<dbReference type="InterPro" id="IPR020846">
    <property type="entry name" value="MFS_dom"/>
</dbReference>
<dbReference type="InterPro" id="IPR044778">
    <property type="entry name" value="MFS_STP/MST-like_plant"/>
</dbReference>
<dbReference type="InterPro" id="IPR005828">
    <property type="entry name" value="MFS_sugar_transport-like"/>
</dbReference>
<dbReference type="InterPro" id="IPR036259">
    <property type="entry name" value="MFS_trans_sf"/>
</dbReference>
<dbReference type="InterPro" id="IPR045262">
    <property type="entry name" value="STP/PLT_plant"/>
</dbReference>
<dbReference type="InterPro" id="IPR003663">
    <property type="entry name" value="Sugar/inositol_transpt"/>
</dbReference>
<dbReference type="InterPro" id="IPR005829">
    <property type="entry name" value="Sugar_transporter_CS"/>
</dbReference>
<dbReference type="NCBIfam" id="TIGR00879">
    <property type="entry name" value="SP"/>
    <property type="match status" value="1"/>
</dbReference>
<dbReference type="PANTHER" id="PTHR23500">
    <property type="entry name" value="SOLUTE CARRIER FAMILY 2, FACILITATED GLUCOSE TRANSPORTER"/>
    <property type="match status" value="1"/>
</dbReference>
<dbReference type="PANTHER" id="PTHR23500:SF109">
    <property type="entry name" value="SUGAR TRANSPORT PROTEIN 7"/>
    <property type="match status" value="1"/>
</dbReference>
<dbReference type="Pfam" id="PF00083">
    <property type="entry name" value="Sugar_tr"/>
    <property type="match status" value="1"/>
</dbReference>
<dbReference type="PRINTS" id="PR00171">
    <property type="entry name" value="SUGRTRNSPORT"/>
</dbReference>
<dbReference type="SUPFAM" id="SSF103473">
    <property type="entry name" value="MFS general substrate transporter"/>
    <property type="match status" value="1"/>
</dbReference>
<dbReference type="PROSITE" id="PS50850">
    <property type="entry name" value="MFS"/>
    <property type="match status" value="1"/>
</dbReference>
<dbReference type="PROSITE" id="PS00216">
    <property type="entry name" value="SUGAR_TRANSPORT_1"/>
    <property type="match status" value="1"/>
</dbReference>
<dbReference type="PROSITE" id="PS00217">
    <property type="entry name" value="SUGAR_TRANSPORT_2"/>
    <property type="match status" value="1"/>
</dbReference>
<accession>O04249</accession>
<accession>O04262</accession>
<accession>O81705</accession>
<reference key="1">
    <citation type="submission" date="2001-09" db="EMBL/GenBank/DDBJ databases">
        <title>STP7 a new Arabidopsis monosaccharide transporter.</title>
        <authorList>
            <person name="Buettner M."/>
        </authorList>
    </citation>
    <scope>NUCLEOTIDE SEQUENCE [MRNA]</scope>
</reference>
<reference key="2">
    <citation type="journal article" date="1999" name="Nature">
        <title>Sequence and analysis of chromosome 4 of the plant Arabidopsis thaliana.</title>
        <authorList>
            <person name="Mayer K.F.X."/>
            <person name="Schueller C."/>
            <person name="Wambutt R."/>
            <person name="Murphy G."/>
            <person name="Volckaert G."/>
            <person name="Pohl T."/>
            <person name="Duesterhoeft A."/>
            <person name="Stiekema W."/>
            <person name="Entian K.-D."/>
            <person name="Terryn N."/>
            <person name="Harris B."/>
            <person name="Ansorge W."/>
            <person name="Brandt P."/>
            <person name="Grivell L.A."/>
            <person name="Rieger M."/>
            <person name="Weichselgartner M."/>
            <person name="de Simone V."/>
            <person name="Obermaier B."/>
            <person name="Mache R."/>
            <person name="Mueller M."/>
            <person name="Kreis M."/>
            <person name="Delseny M."/>
            <person name="Puigdomenech P."/>
            <person name="Watson M."/>
            <person name="Schmidtheini T."/>
            <person name="Reichert B."/>
            <person name="Portetelle D."/>
            <person name="Perez-Alonso M."/>
            <person name="Boutry M."/>
            <person name="Bancroft I."/>
            <person name="Vos P."/>
            <person name="Hoheisel J."/>
            <person name="Zimmermann W."/>
            <person name="Wedler H."/>
            <person name="Ridley P."/>
            <person name="Langham S.-A."/>
            <person name="McCullagh B."/>
            <person name="Bilham L."/>
            <person name="Robben J."/>
            <person name="van der Schueren J."/>
            <person name="Grymonprez B."/>
            <person name="Chuang Y.-J."/>
            <person name="Vandenbussche F."/>
            <person name="Braeken M."/>
            <person name="Weltjens I."/>
            <person name="Voet M."/>
            <person name="Bastiaens I."/>
            <person name="Aert R."/>
            <person name="Defoor E."/>
            <person name="Weitzenegger T."/>
            <person name="Bothe G."/>
            <person name="Ramsperger U."/>
            <person name="Hilbert H."/>
            <person name="Braun M."/>
            <person name="Holzer E."/>
            <person name="Brandt A."/>
            <person name="Peters S."/>
            <person name="van Staveren M."/>
            <person name="Dirkse W."/>
            <person name="Mooijman P."/>
            <person name="Klein Lankhorst R."/>
            <person name="Rose M."/>
            <person name="Hauf J."/>
            <person name="Koetter P."/>
            <person name="Berneiser S."/>
            <person name="Hempel S."/>
            <person name="Feldpausch M."/>
            <person name="Lamberth S."/>
            <person name="Van den Daele H."/>
            <person name="De Keyser A."/>
            <person name="Buysshaert C."/>
            <person name="Gielen J."/>
            <person name="Villarroel R."/>
            <person name="De Clercq R."/>
            <person name="van Montagu M."/>
            <person name="Rogers J."/>
            <person name="Cronin A."/>
            <person name="Quail M.A."/>
            <person name="Bray-Allen S."/>
            <person name="Clark L."/>
            <person name="Doggett J."/>
            <person name="Hall S."/>
            <person name="Kay M."/>
            <person name="Lennard N."/>
            <person name="McLay K."/>
            <person name="Mayes R."/>
            <person name="Pettett A."/>
            <person name="Rajandream M.A."/>
            <person name="Lyne M."/>
            <person name="Benes V."/>
            <person name="Rechmann S."/>
            <person name="Borkova D."/>
            <person name="Bloecker H."/>
            <person name="Scharfe M."/>
            <person name="Grimm M."/>
            <person name="Loehnert T.-H."/>
            <person name="Dose S."/>
            <person name="de Haan M."/>
            <person name="Maarse A.C."/>
            <person name="Schaefer M."/>
            <person name="Mueller-Auer S."/>
            <person name="Gabel C."/>
            <person name="Fuchs M."/>
            <person name="Fartmann B."/>
            <person name="Granderath K."/>
            <person name="Dauner D."/>
            <person name="Herzl A."/>
            <person name="Neumann S."/>
            <person name="Argiriou A."/>
            <person name="Vitale D."/>
            <person name="Liguori R."/>
            <person name="Piravandi E."/>
            <person name="Massenet O."/>
            <person name="Quigley F."/>
            <person name="Clabauld G."/>
            <person name="Muendlein A."/>
            <person name="Felber R."/>
            <person name="Schnabl S."/>
            <person name="Hiller R."/>
            <person name="Schmidt W."/>
            <person name="Lecharny A."/>
            <person name="Aubourg S."/>
            <person name="Chefdor F."/>
            <person name="Cooke R."/>
            <person name="Berger C."/>
            <person name="Monfort A."/>
            <person name="Casacuberta E."/>
            <person name="Gibbons T."/>
            <person name="Weber N."/>
            <person name="Vandenbol M."/>
            <person name="Bargues M."/>
            <person name="Terol J."/>
            <person name="Torres A."/>
            <person name="Perez-Perez A."/>
            <person name="Purnelle B."/>
            <person name="Bent E."/>
            <person name="Johnson S."/>
            <person name="Tacon D."/>
            <person name="Jesse T."/>
            <person name="Heijnen L."/>
            <person name="Schwarz S."/>
            <person name="Scholler P."/>
            <person name="Heber S."/>
            <person name="Francs P."/>
            <person name="Bielke C."/>
            <person name="Frishman D."/>
            <person name="Haase D."/>
            <person name="Lemcke K."/>
            <person name="Mewes H.-W."/>
            <person name="Stocker S."/>
            <person name="Zaccaria P."/>
            <person name="Bevan M."/>
            <person name="Wilson R.K."/>
            <person name="de la Bastide M."/>
            <person name="Habermann K."/>
            <person name="Parnell L."/>
            <person name="Dedhia N."/>
            <person name="Gnoj L."/>
            <person name="Schutz K."/>
            <person name="Huang E."/>
            <person name="Spiegel L."/>
            <person name="Sekhon M."/>
            <person name="Murray J."/>
            <person name="Sheet P."/>
            <person name="Cordes M."/>
            <person name="Abu-Threideh J."/>
            <person name="Stoneking T."/>
            <person name="Kalicki J."/>
            <person name="Graves T."/>
            <person name="Harmon G."/>
            <person name="Edwards J."/>
            <person name="Latreille P."/>
            <person name="Courtney L."/>
            <person name="Cloud J."/>
            <person name="Abbott A."/>
            <person name="Scott K."/>
            <person name="Johnson D."/>
            <person name="Minx P."/>
            <person name="Bentley D."/>
            <person name="Fulton B."/>
            <person name="Miller N."/>
            <person name="Greco T."/>
            <person name="Kemp K."/>
            <person name="Kramer J."/>
            <person name="Fulton L."/>
            <person name="Mardis E."/>
            <person name="Dante M."/>
            <person name="Pepin K."/>
            <person name="Hillier L.W."/>
            <person name="Nelson J."/>
            <person name="Spieth J."/>
            <person name="Ryan E."/>
            <person name="Andrews S."/>
            <person name="Geisel C."/>
            <person name="Layman D."/>
            <person name="Du H."/>
            <person name="Ali J."/>
            <person name="Berghoff A."/>
            <person name="Jones K."/>
            <person name="Drone K."/>
            <person name="Cotton M."/>
            <person name="Joshu C."/>
            <person name="Antonoiu B."/>
            <person name="Zidanic M."/>
            <person name="Strong C."/>
            <person name="Sun H."/>
            <person name="Lamar B."/>
            <person name="Yordan C."/>
            <person name="Ma P."/>
            <person name="Zhong J."/>
            <person name="Preston R."/>
            <person name="Vil D."/>
            <person name="Shekher M."/>
            <person name="Matero A."/>
            <person name="Shah R."/>
            <person name="Swaby I.K."/>
            <person name="O'Shaughnessy A."/>
            <person name="Rodriguez M."/>
            <person name="Hoffman J."/>
            <person name="Till S."/>
            <person name="Granat S."/>
            <person name="Shohdy N."/>
            <person name="Hasegawa A."/>
            <person name="Hameed A."/>
            <person name="Lodhi M."/>
            <person name="Johnson A."/>
            <person name="Chen E."/>
            <person name="Marra M.A."/>
            <person name="Martienssen R."/>
            <person name="McCombie W.R."/>
        </authorList>
    </citation>
    <scope>NUCLEOTIDE SEQUENCE [LARGE SCALE GENOMIC DNA]</scope>
    <source>
        <strain>cv. Columbia</strain>
    </source>
</reference>
<reference key="3">
    <citation type="journal article" date="2017" name="Plant J.">
        <title>Araport11: a complete reannotation of the Arabidopsis thaliana reference genome.</title>
        <authorList>
            <person name="Cheng C.Y."/>
            <person name="Krishnakumar V."/>
            <person name="Chan A.P."/>
            <person name="Thibaud-Nissen F."/>
            <person name="Schobel S."/>
            <person name="Town C.D."/>
        </authorList>
    </citation>
    <scope>GENOME REANNOTATION</scope>
    <source>
        <strain>cv. Columbia</strain>
    </source>
</reference>
<reference key="4">
    <citation type="submission" date="1997-04" db="EMBL/GenBank/DDBJ databases">
        <title>A. thaliana cosmid AGAA.</title>
        <authorList>
            <person name="Till S."/>
            <person name="Granat S."/>
            <person name="Parnell L."/>
            <person name="Kaplan N."/>
            <person name="Hoffman J."/>
            <person name="Lodhi M."/>
            <person name="Johnson A.F."/>
            <person name="Dedhia N."/>
            <person name="Martienssen R."/>
            <person name="McCombie W.R."/>
        </authorList>
    </citation>
    <scope>NUCLEOTIDE SEQUENCE [GENOMIC DNA] OF 1-233</scope>
    <source>
        <strain>cv. Landsberg erecta</strain>
    </source>
</reference>
<reference key="5">
    <citation type="submission" date="1997-09" db="EMBL/GenBank/DDBJ databases">
        <authorList>
            <person name="Baier K."/>
            <person name="Truernit E."/>
            <person name="Sauer N."/>
        </authorList>
    </citation>
    <scope>NUCLEOTIDE SEQUENCE [GENOMIC DNA] OF 406-473</scope>
    <source>
        <strain>cv. C24</strain>
    </source>
</reference>
<reference key="6">
    <citation type="journal article" date="2004" name="Mol. Cell. Proteomics">
        <title>Identification of new intrinsic proteins in Arabidopsis plasma membrane proteome.</title>
        <authorList>
            <person name="Marmagne A."/>
            <person name="Rouet M.-A."/>
            <person name="Ferro M."/>
            <person name="Rolland N."/>
            <person name="Alcon C."/>
            <person name="Joyard J."/>
            <person name="Garin J."/>
            <person name="Barbier-Brygoo H."/>
            <person name="Ephritikhine G."/>
        </authorList>
    </citation>
    <scope>IDENTIFICATION BY MASS SPECTROMETRY</scope>
    <scope>SUBCELLULAR LOCATION [LARGE SCALE ANALYSIS]</scope>
</reference>
<reference key="7">
    <citation type="journal article" date="2006" name="BMC Evol. Biol.">
        <title>The monosaccharide transporter gene family in land plants is ancient and shows differential subfamily expression and expansion across lineages.</title>
        <authorList>
            <person name="Johnson D.A."/>
            <person name="Hill J.P."/>
            <person name="Thomas M.A."/>
        </authorList>
    </citation>
    <scope>GENE FAMILY</scope>
</reference>